<reference key="1">
    <citation type="journal article" date="1998" name="Microbiology">
        <title>The yvsA-yvqA (293 degrees - 289 degrees) region of the Bacillus subtilis chromosome containing genes involved in metal ion uptake and a putative sigma factor.</title>
        <authorList>
            <person name="Wipat A."/>
            <person name="Brignell C.S."/>
            <person name="Guy J.B."/>
            <person name="Rose M."/>
            <person name="Emmerson P.T."/>
            <person name="Harwood C.R."/>
        </authorList>
    </citation>
    <scope>NUCLEOTIDE SEQUENCE [GENOMIC DNA]</scope>
    <source>
        <strain>168</strain>
    </source>
</reference>
<reference key="2">
    <citation type="journal article" date="1997" name="Nature">
        <title>The complete genome sequence of the Gram-positive bacterium Bacillus subtilis.</title>
        <authorList>
            <person name="Kunst F."/>
            <person name="Ogasawara N."/>
            <person name="Moszer I."/>
            <person name="Albertini A.M."/>
            <person name="Alloni G."/>
            <person name="Azevedo V."/>
            <person name="Bertero M.G."/>
            <person name="Bessieres P."/>
            <person name="Bolotin A."/>
            <person name="Borchert S."/>
            <person name="Borriss R."/>
            <person name="Boursier L."/>
            <person name="Brans A."/>
            <person name="Braun M."/>
            <person name="Brignell S.C."/>
            <person name="Bron S."/>
            <person name="Brouillet S."/>
            <person name="Bruschi C.V."/>
            <person name="Caldwell B."/>
            <person name="Capuano V."/>
            <person name="Carter N.M."/>
            <person name="Choi S.-K."/>
            <person name="Codani J.-J."/>
            <person name="Connerton I.F."/>
            <person name="Cummings N.J."/>
            <person name="Daniel R.A."/>
            <person name="Denizot F."/>
            <person name="Devine K.M."/>
            <person name="Duesterhoeft A."/>
            <person name="Ehrlich S.D."/>
            <person name="Emmerson P.T."/>
            <person name="Entian K.-D."/>
            <person name="Errington J."/>
            <person name="Fabret C."/>
            <person name="Ferrari E."/>
            <person name="Foulger D."/>
            <person name="Fritz C."/>
            <person name="Fujita M."/>
            <person name="Fujita Y."/>
            <person name="Fuma S."/>
            <person name="Galizzi A."/>
            <person name="Galleron N."/>
            <person name="Ghim S.-Y."/>
            <person name="Glaser P."/>
            <person name="Goffeau A."/>
            <person name="Golightly E.J."/>
            <person name="Grandi G."/>
            <person name="Guiseppi G."/>
            <person name="Guy B.J."/>
            <person name="Haga K."/>
            <person name="Haiech J."/>
            <person name="Harwood C.R."/>
            <person name="Henaut A."/>
            <person name="Hilbert H."/>
            <person name="Holsappel S."/>
            <person name="Hosono S."/>
            <person name="Hullo M.-F."/>
            <person name="Itaya M."/>
            <person name="Jones L.-M."/>
            <person name="Joris B."/>
            <person name="Karamata D."/>
            <person name="Kasahara Y."/>
            <person name="Klaerr-Blanchard M."/>
            <person name="Klein C."/>
            <person name="Kobayashi Y."/>
            <person name="Koetter P."/>
            <person name="Koningstein G."/>
            <person name="Krogh S."/>
            <person name="Kumano M."/>
            <person name="Kurita K."/>
            <person name="Lapidus A."/>
            <person name="Lardinois S."/>
            <person name="Lauber J."/>
            <person name="Lazarevic V."/>
            <person name="Lee S.-M."/>
            <person name="Levine A."/>
            <person name="Liu H."/>
            <person name="Masuda S."/>
            <person name="Mauel C."/>
            <person name="Medigue C."/>
            <person name="Medina N."/>
            <person name="Mellado R.P."/>
            <person name="Mizuno M."/>
            <person name="Moestl D."/>
            <person name="Nakai S."/>
            <person name="Noback M."/>
            <person name="Noone D."/>
            <person name="O'Reilly M."/>
            <person name="Ogawa K."/>
            <person name="Ogiwara A."/>
            <person name="Oudega B."/>
            <person name="Park S.-H."/>
            <person name="Parro V."/>
            <person name="Pohl T.M."/>
            <person name="Portetelle D."/>
            <person name="Porwollik S."/>
            <person name="Prescott A.M."/>
            <person name="Presecan E."/>
            <person name="Pujic P."/>
            <person name="Purnelle B."/>
            <person name="Rapoport G."/>
            <person name="Rey M."/>
            <person name="Reynolds S."/>
            <person name="Rieger M."/>
            <person name="Rivolta C."/>
            <person name="Rocha E."/>
            <person name="Roche B."/>
            <person name="Rose M."/>
            <person name="Sadaie Y."/>
            <person name="Sato T."/>
            <person name="Scanlan E."/>
            <person name="Schleich S."/>
            <person name="Schroeter R."/>
            <person name="Scoffone F."/>
            <person name="Sekiguchi J."/>
            <person name="Sekowska A."/>
            <person name="Seror S.J."/>
            <person name="Serror P."/>
            <person name="Shin B.-S."/>
            <person name="Soldo B."/>
            <person name="Sorokin A."/>
            <person name="Tacconi E."/>
            <person name="Takagi T."/>
            <person name="Takahashi H."/>
            <person name="Takemaru K."/>
            <person name="Takeuchi M."/>
            <person name="Tamakoshi A."/>
            <person name="Tanaka T."/>
            <person name="Terpstra P."/>
            <person name="Tognoni A."/>
            <person name="Tosato V."/>
            <person name="Uchiyama S."/>
            <person name="Vandenbol M."/>
            <person name="Vannier F."/>
            <person name="Vassarotti A."/>
            <person name="Viari A."/>
            <person name="Wambutt R."/>
            <person name="Wedler E."/>
            <person name="Wedler H."/>
            <person name="Weitzenegger T."/>
            <person name="Winters P."/>
            <person name="Wipat A."/>
            <person name="Yamamoto H."/>
            <person name="Yamane K."/>
            <person name="Yasumoto K."/>
            <person name="Yata K."/>
            <person name="Yoshida K."/>
            <person name="Yoshikawa H.-F."/>
            <person name="Zumstein E."/>
            <person name="Yoshikawa H."/>
            <person name="Danchin A."/>
        </authorList>
    </citation>
    <scope>NUCLEOTIDE SEQUENCE [LARGE SCALE GENOMIC DNA]</scope>
    <source>
        <strain>168</strain>
    </source>
</reference>
<evidence type="ECO:0000255" key="1"/>
<evidence type="ECO:0000305" key="2"/>
<proteinExistence type="inferred from homology"/>
<dbReference type="EMBL" id="AJ223978">
    <property type="protein sequence ID" value="CAA11739.1"/>
    <property type="molecule type" value="Genomic_DNA"/>
</dbReference>
<dbReference type="EMBL" id="AL009126">
    <property type="protein sequence ID" value="CAB15304.1"/>
    <property type="molecule type" value="Genomic_DNA"/>
</dbReference>
<dbReference type="PIR" id="C70046">
    <property type="entry name" value="C70046"/>
</dbReference>
<dbReference type="RefSeq" id="NP_391194.1">
    <property type="nucleotide sequence ID" value="NC_000964.3"/>
</dbReference>
<dbReference type="RefSeq" id="WP_003244338.1">
    <property type="nucleotide sequence ID" value="NZ_OZ025638.1"/>
</dbReference>
<dbReference type="SMR" id="O32203"/>
<dbReference type="FunCoup" id="O32203">
    <property type="interactions" value="47"/>
</dbReference>
<dbReference type="STRING" id="224308.BSU33140"/>
<dbReference type="PaxDb" id="224308-BSU33140"/>
<dbReference type="EnsemblBacteria" id="CAB15304">
    <property type="protein sequence ID" value="CAB15304"/>
    <property type="gene ID" value="BSU_33140"/>
</dbReference>
<dbReference type="GeneID" id="935970"/>
<dbReference type="KEGG" id="bsu:BSU33140"/>
<dbReference type="PATRIC" id="fig|224308.179.peg.3593"/>
<dbReference type="eggNOG" id="COG2814">
    <property type="taxonomic scope" value="Bacteria"/>
</dbReference>
<dbReference type="InParanoid" id="O32203"/>
<dbReference type="OrthoDB" id="2917069at2"/>
<dbReference type="PhylomeDB" id="O32203"/>
<dbReference type="BioCyc" id="BSUB:BSU33140-MONOMER"/>
<dbReference type="Proteomes" id="UP000001570">
    <property type="component" value="Chromosome"/>
</dbReference>
<dbReference type="GO" id="GO:0005886">
    <property type="term" value="C:plasma membrane"/>
    <property type="evidence" value="ECO:0000318"/>
    <property type="project" value="GO_Central"/>
</dbReference>
<dbReference type="GO" id="GO:0015562">
    <property type="term" value="F:efflux transmembrane transporter activity"/>
    <property type="evidence" value="ECO:0000318"/>
    <property type="project" value="GO_Central"/>
</dbReference>
<dbReference type="GO" id="GO:0046677">
    <property type="term" value="P:response to antibiotic"/>
    <property type="evidence" value="ECO:0000318"/>
    <property type="project" value="GO_Central"/>
</dbReference>
<dbReference type="CDD" id="cd06173">
    <property type="entry name" value="MFS_MefA_like"/>
    <property type="match status" value="1"/>
</dbReference>
<dbReference type="Gene3D" id="1.20.1250.20">
    <property type="entry name" value="MFS general substrate transporter like domains"/>
    <property type="match status" value="1"/>
</dbReference>
<dbReference type="InterPro" id="IPR011701">
    <property type="entry name" value="MFS"/>
</dbReference>
<dbReference type="InterPro" id="IPR036259">
    <property type="entry name" value="MFS_trans_sf"/>
</dbReference>
<dbReference type="PANTHER" id="PTHR23513:SF9">
    <property type="entry name" value="ENTEROBACTIN EXPORTER ENTS"/>
    <property type="match status" value="1"/>
</dbReference>
<dbReference type="PANTHER" id="PTHR23513">
    <property type="entry name" value="INTEGRAL MEMBRANE EFFLUX PROTEIN-RELATED"/>
    <property type="match status" value="1"/>
</dbReference>
<dbReference type="Pfam" id="PF07690">
    <property type="entry name" value="MFS_1"/>
    <property type="match status" value="1"/>
</dbReference>
<dbReference type="SUPFAM" id="SSF103473">
    <property type="entry name" value="MFS general substrate transporter"/>
    <property type="match status" value="1"/>
</dbReference>
<protein>
    <recommendedName>
        <fullName>Uncharacterized MFS-type transporter YvqJ</fullName>
    </recommendedName>
</protein>
<feature type="chain" id="PRO_0000375922" description="Uncharacterized MFS-type transporter YvqJ">
    <location>
        <begin position="1"/>
        <end position="422"/>
    </location>
</feature>
<feature type="transmembrane region" description="Helical" evidence="1">
    <location>
        <begin position="23"/>
        <end position="43"/>
    </location>
</feature>
<feature type="transmembrane region" description="Helical" evidence="1">
    <location>
        <begin position="47"/>
        <end position="67"/>
    </location>
</feature>
<feature type="transmembrane region" description="Helical" evidence="1">
    <location>
        <begin position="90"/>
        <end position="110"/>
    </location>
</feature>
<feature type="transmembrane region" description="Helical" evidence="1">
    <location>
        <begin position="112"/>
        <end position="132"/>
    </location>
</feature>
<feature type="transmembrane region" description="Helical" evidence="1">
    <location>
        <begin position="151"/>
        <end position="171"/>
    </location>
</feature>
<feature type="transmembrane region" description="Helical" evidence="1">
    <location>
        <begin position="172"/>
        <end position="192"/>
    </location>
</feature>
<feature type="transmembrane region" description="Helical" evidence="1">
    <location>
        <begin position="228"/>
        <end position="248"/>
    </location>
</feature>
<feature type="transmembrane region" description="Helical" evidence="1">
    <location>
        <begin position="263"/>
        <end position="283"/>
    </location>
</feature>
<feature type="transmembrane region" description="Helical" evidence="1">
    <location>
        <begin position="291"/>
        <end position="308"/>
    </location>
</feature>
<feature type="transmembrane region" description="Helical" evidence="1">
    <location>
        <begin position="318"/>
        <end position="340"/>
    </location>
</feature>
<feature type="transmembrane region" description="Helical" evidence="1">
    <location>
        <begin position="352"/>
        <end position="372"/>
    </location>
</feature>
<feature type="transmembrane region" description="Helical" evidence="1">
    <location>
        <begin position="381"/>
        <end position="401"/>
    </location>
</feature>
<accession>O32203</accession>
<accession>Q7B2J7</accession>
<gene>
    <name type="primary">yvqJ</name>
    <name type="ordered locus">BSU33140</name>
</gene>
<sequence length="422" mass="45896">MVNLIESDSIWKRNFNYLFFSRIVKISGDMFAFNSILWFLIYDGKGAIGTALLIAVTFLPEAVLAPVTGPFMKQTTLKFWMYFSDLTRAAIVLIIPLCHFAGFSPLWFVMTLMIVHSATGAAYNPASIALIPQIVNEQGIQKANAVLQSSAQIVRLGAVTLCGAFLTFISPSYTMLIALVLYLVSGFLVLFIKYTAVESQSESAVVTQRGTYIGRLKRGFRLVRKHQILYPLAIYCIFMNFAAAPWEALSAVYVAEDLNGQPIVYSLLKATTAAGAFLLGFVLAKVKVNRYGLLFVTAGIIEGFAFFITGMNTFLPLVFFAAFTFGAAVSAVNVPEYTIIQTSVDSEDQPQVYAVIHMISNISIPAGAVICGYAANAFGSGKVIAVGGIVEIIAGIGILLFTKLAKAERSDLIKEREASVHL</sequence>
<comment type="subcellular location">
    <subcellularLocation>
        <location evidence="2">Cell membrane</location>
        <topology evidence="2">Multi-pass membrane protein</topology>
    </subcellularLocation>
</comment>
<comment type="similarity">
    <text evidence="2">Belongs to the major facilitator superfamily.</text>
</comment>
<name>YVQJ_BACSU</name>
<keyword id="KW-1003">Cell membrane</keyword>
<keyword id="KW-0472">Membrane</keyword>
<keyword id="KW-1185">Reference proteome</keyword>
<keyword id="KW-0812">Transmembrane</keyword>
<keyword id="KW-1133">Transmembrane helix</keyword>
<keyword id="KW-0813">Transport</keyword>
<organism>
    <name type="scientific">Bacillus subtilis (strain 168)</name>
    <dbReference type="NCBI Taxonomy" id="224308"/>
    <lineage>
        <taxon>Bacteria</taxon>
        <taxon>Bacillati</taxon>
        <taxon>Bacillota</taxon>
        <taxon>Bacilli</taxon>
        <taxon>Bacillales</taxon>
        <taxon>Bacillaceae</taxon>
        <taxon>Bacillus</taxon>
    </lineage>
</organism>